<organism>
    <name type="scientific">Burkholderia ambifaria (strain MC40-6)</name>
    <dbReference type="NCBI Taxonomy" id="398577"/>
    <lineage>
        <taxon>Bacteria</taxon>
        <taxon>Pseudomonadati</taxon>
        <taxon>Pseudomonadota</taxon>
        <taxon>Betaproteobacteria</taxon>
        <taxon>Burkholderiales</taxon>
        <taxon>Burkholderiaceae</taxon>
        <taxon>Burkholderia</taxon>
        <taxon>Burkholderia cepacia complex</taxon>
    </lineage>
</organism>
<evidence type="ECO:0000255" key="1">
    <source>
        <dbReference type="HAMAP-Rule" id="MF_01102"/>
    </source>
</evidence>
<name>MNMC_BURA4</name>
<proteinExistence type="inferred from homology"/>
<gene>
    <name evidence="1" type="primary">mnmC</name>
    <name type="ordered locus">BamMC406_0066</name>
</gene>
<sequence length="652" mass="69949">MPDRLVPATLARRDDGILVSPEYGELPRDASHARAHANRMLAGTGLPAHWRGRRTFTIVETGFGTGSRFLATWAAWRDDPARCERLHFVAIEPHPFARDDLRRAVSNFVADTTISENADALLDAWPMHVPGLHRLEFDAGRVVLTLAFGDAHDMLQRLVARADAFYLGNLASAAHGDVLSADVIRALARIAADGATYATHSHDDAVKHALEQTGFTSRDVEDGAGEPALRVGEYAPRWRMRRHEPPRALPVASREAIVIGAGLAGCAVVERLAARGWNITLIERHEQIASEASGNPAGVFHPLMTRDDNVASRLTRSGFLHALARWRALEEAGHAFARSTRGMIHLAESADDFARMRDAFDALGAPSDYVSLLDTDAARAHLNLPVAHGGLLFPHGGAVWPAGVCAAQIAAAGERVKLLAGTEVARLERDRDMWRAVDAASATLAEAPVVVLANAGDAVRLAGLRHVALQPVRGQLTLLPPGSTAPLPCPTIGDGYAVPLDDGTLLIGATFEPDDVDRTMRTAGHIENLERVRHLLPGLIGELPDVDTLRGRVAFRWVVADRVPVIGPLADEAQGVANARALSGAKARDLPRAAGLYGAFGYGSRGLVWAALGAELIASQLEGEPLPLERELVDAVDPARFLIRALRGRQIG</sequence>
<dbReference type="EC" id="2.1.1.61" evidence="1"/>
<dbReference type="EC" id="1.5.-.-" evidence="1"/>
<dbReference type="EMBL" id="CP001025">
    <property type="protein sequence ID" value="ACB62568.1"/>
    <property type="molecule type" value="Genomic_DNA"/>
</dbReference>
<dbReference type="RefSeq" id="WP_012362742.1">
    <property type="nucleotide sequence ID" value="NC_010551.1"/>
</dbReference>
<dbReference type="SMR" id="B1YQ54"/>
<dbReference type="KEGG" id="bac:BamMC406_0066"/>
<dbReference type="HOGENOM" id="CLU_022427_1_0_4"/>
<dbReference type="OrthoDB" id="9786494at2"/>
<dbReference type="Proteomes" id="UP000001680">
    <property type="component" value="Chromosome 1"/>
</dbReference>
<dbReference type="GO" id="GO:0005737">
    <property type="term" value="C:cytoplasm"/>
    <property type="evidence" value="ECO:0007669"/>
    <property type="project" value="UniProtKB-SubCell"/>
</dbReference>
<dbReference type="GO" id="GO:0050660">
    <property type="term" value="F:flavin adenine dinucleotide binding"/>
    <property type="evidence" value="ECO:0007669"/>
    <property type="project" value="UniProtKB-UniRule"/>
</dbReference>
<dbReference type="GO" id="GO:0016645">
    <property type="term" value="F:oxidoreductase activity, acting on the CH-NH group of donors"/>
    <property type="evidence" value="ECO:0007669"/>
    <property type="project" value="InterPro"/>
</dbReference>
<dbReference type="GO" id="GO:0004808">
    <property type="term" value="F:tRNA (5-methylaminomethyl-2-thiouridylate)(34)-methyltransferase activity"/>
    <property type="evidence" value="ECO:0007669"/>
    <property type="project" value="UniProtKB-EC"/>
</dbReference>
<dbReference type="GO" id="GO:0032259">
    <property type="term" value="P:methylation"/>
    <property type="evidence" value="ECO:0007669"/>
    <property type="project" value="UniProtKB-KW"/>
</dbReference>
<dbReference type="GO" id="GO:0002097">
    <property type="term" value="P:tRNA wobble base modification"/>
    <property type="evidence" value="ECO:0007669"/>
    <property type="project" value="UniProtKB-UniRule"/>
</dbReference>
<dbReference type="Gene3D" id="3.30.9.10">
    <property type="entry name" value="D-Amino Acid Oxidase, subunit A, domain 2"/>
    <property type="match status" value="1"/>
</dbReference>
<dbReference type="Gene3D" id="3.50.50.60">
    <property type="entry name" value="FAD/NAD(P)-binding domain"/>
    <property type="match status" value="1"/>
</dbReference>
<dbReference type="Gene3D" id="3.40.50.150">
    <property type="entry name" value="Vaccinia Virus protein VP39"/>
    <property type="match status" value="1"/>
</dbReference>
<dbReference type="HAMAP" id="MF_01102">
    <property type="entry name" value="MnmC"/>
    <property type="match status" value="1"/>
</dbReference>
<dbReference type="InterPro" id="IPR006076">
    <property type="entry name" value="FAD-dep_OxRdtase"/>
</dbReference>
<dbReference type="InterPro" id="IPR036188">
    <property type="entry name" value="FAD/NAD-bd_sf"/>
</dbReference>
<dbReference type="InterPro" id="IPR008471">
    <property type="entry name" value="MnmC-like_methylTransf"/>
</dbReference>
<dbReference type="InterPro" id="IPR029063">
    <property type="entry name" value="SAM-dependent_MTases_sf"/>
</dbReference>
<dbReference type="InterPro" id="IPR023032">
    <property type="entry name" value="tRNA_MAMT_biosynth_bifunc_MnmC"/>
</dbReference>
<dbReference type="InterPro" id="IPR017610">
    <property type="entry name" value="tRNA_S-uridine_synth_MnmC_C"/>
</dbReference>
<dbReference type="NCBIfam" id="TIGR03197">
    <property type="entry name" value="MnmC_Cterm"/>
    <property type="match status" value="1"/>
</dbReference>
<dbReference type="NCBIfam" id="NF002483">
    <property type="entry name" value="PRK01747.1-4"/>
    <property type="match status" value="1"/>
</dbReference>
<dbReference type="PANTHER" id="PTHR13847">
    <property type="entry name" value="SARCOSINE DEHYDROGENASE-RELATED"/>
    <property type="match status" value="1"/>
</dbReference>
<dbReference type="PANTHER" id="PTHR13847:SF283">
    <property type="entry name" value="TRNA 5-METHYLAMINOMETHYL-2-THIOURIDINE BIOSYNTHESIS BIFUNCTIONAL PROTEIN MNMC"/>
    <property type="match status" value="1"/>
</dbReference>
<dbReference type="Pfam" id="PF01266">
    <property type="entry name" value="DAO"/>
    <property type="match status" value="1"/>
</dbReference>
<dbReference type="Pfam" id="PF05430">
    <property type="entry name" value="Methyltransf_30"/>
    <property type="match status" value="1"/>
</dbReference>
<dbReference type="SUPFAM" id="SSF54373">
    <property type="entry name" value="FAD-linked reductases, C-terminal domain"/>
    <property type="match status" value="1"/>
</dbReference>
<dbReference type="SUPFAM" id="SSF51905">
    <property type="entry name" value="FAD/NAD(P)-binding domain"/>
    <property type="match status" value="1"/>
</dbReference>
<feature type="chain" id="PRO_0000347948" description="tRNA 5-methylaminomethyl-2-thiouridine biosynthesis bifunctional protein MnmC">
    <location>
        <begin position="1"/>
        <end position="652"/>
    </location>
</feature>
<feature type="region of interest" description="tRNA (mnm(5)s(2)U34)-methyltransferase">
    <location>
        <begin position="1"/>
        <end position="235"/>
    </location>
</feature>
<feature type="region of interest" description="FAD-dependent cmnm(5)s(2)U34 oxidoreductase">
    <location>
        <begin position="259"/>
        <end position="652"/>
    </location>
</feature>
<accession>B1YQ54</accession>
<reference key="1">
    <citation type="submission" date="2008-04" db="EMBL/GenBank/DDBJ databases">
        <title>Complete sequence of chromosome 1 of Burkholderia ambifaria MC40-6.</title>
        <authorList>
            <person name="Copeland A."/>
            <person name="Lucas S."/>
            <person name="Lapidus A."/>
            <person name="Glavina del Rio T."/>
            <person name="Dalin E."/>
            <person name="Tice H."/>
            <person name="Pitluck S."/>
            <person name="Chain P."/>
            <person name="Malfatti S."/>
            <person name="Shin M."/>
            <person name="Vergez L."/>
            <person name="Lang D."/>
            <person name="Schmutz J."/>
            <person name="Larimer F."/>
            <person name="Land M."/>
            <person name="Hauser L."/>
            <person name="Kyrpides N."/>
            <person name="Lykidis A."/>
            <person name="Ramette A."/>
            <person name="Konstantinidis K."/>
            <person name="Tiedje J."/>
            <person name="Richardson P."/>
        </authorList>
    </citation>
    <scope>NUCLEOTIDE SEQUENCE [LARGE SCALE GENOMIC DNA]</scope>
    <source>
        <strain>MC40-6</strain>
    </source>
</reference>
<comment type="function">
    <text evidence="1">Catalyzes the last two steps in the biosynthesis of 5-methylaminomethyl-2-thiouridine (mnm(5)s(2)U) at the wobble position (U34) in tRNA. Catalyzes the FAD-dependent demodification of cmnm(5)s(2)U34 to nm(5)s(2)U34, followed by the transfer of a methyl group from S-adenosyl-L-methionine to nm(5)s(2)U34, to form mnm(5)s(2)U34.</text>
</comment>
<comment type="catalytic activity">
    <reaction evidence="1">
        <text>5-aminomethyl-2-thiouridine(34) in tRNA + S-adenosyl-L-methionine = 5-methylaminomethyl-2-thiouridine(34) in tRNA + S-adenosyl-L-homocysteine + H(+)</text>
        <dbReference type="Rhea" id="RHEA:19569"/>
        <dbReference type="Rhea" id="RHEA-COMP:10195"/>
        <dbReference type="Rhea" id="RHEA-COMP:10197"/>
        <dbReference type="ChEBI" id="CHEBI:15378"/>
        <dbReference type="ChEBI" id="CHEBI:57856"/>
        <dbReference type="ChEBI" id="CHEBI:59789"/>
        <dbReference type="ChEBI" id="CHEBI:74454"/>
        <dbReference type="ChEBI" id="CHEBI:74455"/>
        <dbReference type="EC" id="2.1.1.61"/>
    </reaction>
</comment>
<comment type="cofactor">
    <cofactor evidence="1">
        <name>FAD</name>
        <dbReference type="ChEBI" id="CHEBI:57692"/>
    </cofactor>
</comment>
<comment type="subcellular location">
    <subcellularLocation>
        <location evidence="1">Cytoplasm</location>
    </subcellularLocation>
</comment>
<comment type="similarity">
    <text evidence="1">In the N-terminal section; belongs to the methyltransferase superfamily. tRNA (mnm(5)s(2)U34)-methyltransferase family.</text>
</comment>
<comment type="similarity">
    <text evidence="1">In the C-terminal section; belongs to the DAO family.</text>
</comment>
<protein>
    <recommendedName>
        <fullName evidence="1">tRNA 5-methylaminomethyl-2-thiouridine biosynthesis bifunctional protein MnmC</fullName>
        <shortName evidence="1">tRNA mnm(5)s(2)U biosynthesis bifunctional protein</shortName>
    </recommendedName>
    <domain>
        <recommendedName>
            <fullName evidence="1">tRNA (mnm(5)s(2)U34)-methyltransferase</fullName>
            <ecNumber evidence="1">2.1.1.61</ecNumber>
        </recommendedName>
    </domain>
    <domain>
        <recommendedName>
            <fullName evidence="1">FAD-dependent cmnm(5)s(2)U34 oxidoreductase</fullName>
            <ecNumber evidence="1">1.5.-.-</ecNumber>
        </recommendedName>
    </domain>
</protein>
<keyword id="KW-0963">Cytoplasm</keyword>
<keyword id="KW-0274">FAD</keyword>
<keyword id="KW-0285">Flavoprotein</keyword>
<keyword id="KW-0489">Methyltransferase</keyword>
<keyword id="KW-0511">Multifunctional enzyme</keyword>
<keyword id="KW-0560">Oxidoreductase</keyword>
<keyword id="KW-0949">S-adenosyl-L-methionine</keyword>
<keyword id="KW-0808">Transferase</keyword>
<keyword id="KW-0819">tRNA processing</keyword>